<proteinExistence type="inferred from homology"/>
<protein>
    <recommendedName>
        <fullName evidence="1">Aspartyl/glutamyl-tRNA(Asn/Gln) amidotransferase subunit B</fullName>
        <shortName evidence="1">Asp/Glu-ADT subunit B</shortName>
        <ecNumber evidence="1">6.3.5.-</ecNumber>
    </recommendedName>
</protein>
<evidence type="ECO:0000255" key="1">
    <source>
        <dbReference type="HAMAP-Rule" id="MF_00121"/>
    </source>
</evidence>
<reference key="1">
    <citation type="journal article" date="2009" name="PLoS ONE">
        <title>The complete genome of Teredinibacter turnerae T7901: an intracellular endosymbiont of marine wood-boring bivalves (shipworms).</title>
        <authorList>
            <person name="Yang J.C."/>
            <person name="Madupu R."/>
            <person name="Durkin A.S."/>
            <person name="Ekborg N.A."/>
            <person name="Pedamallu C.S."/>
            <person name="Hostetler J.B."/>
            <person name="Radune D."/>
            <person name="Toms B.S."/>
            <person name="Henrissat B."/>
            <person name="Coutinho P.M."/>
            <person name="Schwarz S."/>
            <person name="Field L."/>
            <person name="Trindade-Silva A.E."/>
            <person name="Soares C.A.G."/>
            <person name="Elshahawi S."/>
            <person name="Hanora A."/>
            <person name="Schmidt E.W."/>
            <person name="Haygood M.G."/>
            <person name="Posfai J."/>
            <person name="Benner J."/>
            <person name="Madinger C."/>
            <person name="Nove J."/>
            <person name="Anton B."/>
            <person name="Chaudhary K."/>
            <person name="Foster J."/>
            <person name="Holman A."/>
            <person name="Kumar S."/>
            <person name="Lessard P.A."/>
            <person name="Luyten Y.A."/>
            <person name="Slatko B."/>
            <person name="Wood N."/>
            <person name="Wu B."/>
            <person name="Teplitski M."/>
            <person name="Mougous J.D."/>
            <person name="Ward N."/>
            <person name="Eisen J.A."/>
            <person name="Badger J.H."/>
            <person name="Distel D.L."/>
        </authorList>
    </citation>
    <scope>NUCLEOTIDE SEQUENCE [LARGE SCALE GENOMIC DNA]</scope>
    <source>
        <strain>ATCC 39867 / T7901</strain>
    </source>
</reference>
<accession>C5BSY9</accession>
<feature type="chain" id="PRO_1000203061" description="Aspartyl/glutamyl-tRNA(Asn/Gln) amidotransferase subunit B">
    <location>
        <begin position="1"/>
        <end position="481"/>
    </location>
</feature>
<organism>
    <name type="scientific">Teredinibacter turnerae (strain ATCC 39867 / T7901)</name>
    <dbReference type="NCBI Taxonomy" id="377629"/>
    <lineage>
        <taxon>Bacteria</taxon>
        <taxon>Pseudomonadati</taxon>
        <taxon>Pseudomonadota</taxon>
        <taxon>Gammaproteobacteria</taxon>
        <taxon>Cellvibrionales</taxon>
        <taxon>Cellvibrionaceae</taxon>
        <taxon>Teredinibacter</taxon>
    </lineage>
</organism>
<sequence>MEWETIIGLEVHVQLATNTKIFSGSSTAFGAEPNTQACAIDLAMPGTLPTPNAEAFRFATMFGLAVNAEIGKRSVFERKNYFYPDLPKGYQTTQLAEPIVGPGYVDIQLADGSEKRVRIHHAHLEEDAGKSLHEDFHGMSGIDLNRAGTPLIEVVTEPDMRSAEEAVAFARKLHSIVTSLGICDGEMSQGSMRFDVNISVRLKGDEKLGTRTETKNLNSFRFMERCIEQEVERQIEVIEDGGKIIQETRLYDGETHKARSMRSKEEANDYRYFPCPDLLPVMLDDDFIDAARAAMPELPDARQLRFEESYGLSPYDAGIISADAATADFFEAVAAKCSDAKLAANWVMGEISARLNAEEIRITAAKVSAEQLAGLIARIKDQTISNKIAKQVFDAMWNGEGDADTIIEAKGLKQVSDSGALEKMVDDVMNANPAQVENYRKADPAKQPKMLGFFVGQVMKASKGQANPQQLNDILKKKLEN</sequence>
<name>GATB_TERTT</name>
<keyword id="KW-0067">ATP-binding</keyword>
<keyword id="KW-0436">Ligase</keyword>
<keyword id="KW-0547">Nucleotide-binding</keyword>
<keyword id="KW-0648">Protein biosynthesis</keyword>
<keyword id="KW-1185">Reference proteome</keyword>
<dbReference type="EC" id="6.3.5.-" evidence="1"/>
<dbReference type="EMBL" id="CP001614">
    <property type="protein sequence ID" value="ACR13897.1"/>
    <property type="molecule type" value="Genomic_DNA"/>
</dbReference>
<dbReference type="RefSeq" id="WP_015820012.1">
    <property type="nucleotide sequence ID" value="NC_012997.1"/>
</dbReference>
<dbReference type="SMR" id="C5BSY9"/>
<dbReference type="STRING" id="377629.TERTU_3837"/>
<dbReference type="KEGG" id="ttu:TERTU_3837"/>
<dbReference type="eggNOG" id="COG0064">
    <property type="taxonomic scope" value="Bacteria"/>
</dbReference>
<dbReference type="HOGENOM" id="CLU_019240_0_0_6"/>
<dbReference type="OrthoDB" id="9804078at2"/>
<dbReference type="Proteomes" id="UP000009080">
    <property type="component" value="Chromosome"/>
</dbReference>
<dbReference type="GO" id="GO:0050566">
    <property type="term" value="F:asparaginyl-tRNA synthase (glutamine-hydrolyzing) activity"/>
    <property type="evidence" value="ECO:0007669"/>
    <property type="project" value="RHEA"/>
</dbReference>
<dbReference type="GO" id="GO:0005524">
    <property type="term" value="F:ATP binding"/>
    <property type="evidence" value="ECO:0007669"/>
    <property type="project" value="UniProtKB-KW"/>
</dbReference>
<dbReference type="GO" id="GO:0050567">
    <property type="term" value="F:glutaminyl-tRNA synthase (glutamine-hydrolyzing) activity"/>
    <property type="evidence" value="ECO:0007669"/>
    <property type="project" value="UniProtKB-UniRule"/>
</dbReference>
<dbReference type="GO" id="GO:0070681">
    <property type="term" value="P:glutaminyl-tRNAGln biosynthesis via transamidation"/>
    <property type="evidence" value="ECO:0007669"/>
    <property type="project" value="TreeGrafter"/>
</dbReference>
<dbReference type="GO" id="GO:0006412">
    <property type="term" value="P:translation"/>
    <property type="evidence" value="ECO:0007669"/>
    <property type="project" value="UniProtKB-UniRule"/>
</dbReference>
<dbReference type="FunFam" id="1.10.10.410:FF:000001">
    <property type="entry name" value="Aspartyl/glutamyl-tRNA(Asn/Gln) amidotransferase subunit B"/>
    <property type="match status" value="1"/>
</dbReference>
<dbReference type="FunFam" id="1.10.150.380:FF:000001">
    <property type="entry name" value="Aspartyl/glutamyl-tRNA(Asn/Gln) amidotransferase subunit B"/>
    <property type="match status" value="1"/>
</dbReference>
<dbReference type="Gene3D" id="1.10.10.410">
    <property type="match status" value="1"/>
</dbReference>
<dbReference type="Gene3D" id="1.10.150.380">
    <property type="entry name" value="GatB domain, N-terminal subdomain"/>
    <property type="match status" value="1"/>
</dbReference>
<dbReference type="HAMAP" id="MF_00121">
    <property type="entry name" value="GatB"/>
    <property type="match status" value="1"/>
</dbReference>
<dbReference type="InterPro" id="IPR017959">
    <property type="entry name" value="Asn/Gln-tRNA_amidoTrfase_suB/E"/>
</dbReference>
<dbReference type="InterPro" id="IPR006075">
    <property type="entry name" value="Asn/Gln-tRNA_Trfase_suB/E_cat"/>
</dbReference>
<dbReference type="InterPro" id="IPR018027">
    <property type="entry name" value="Asn/Gln_amidotransferase"/>
</dbReference>
<dbReference type="InterPro" id="IPR003789">
    <property type="entry name" value="Asn/Gln_tRNA_amidoTrase-B-like"/>
</dbReference>
<dbReference type="InterPro" id="IPR004413">
    <property type="entry name" value="GatB"/>
</dbReference>
<dbReference type="InterPro" id="IPR042114">
    <property type="entry name" value="GatB_C_1"/>
</dbReference>
<dbReference type="InterPro" id="IPR023168">
    <property type="entry name" value="GatB_Yqey_C_2"/>
</dbReference>
<dbReference type="InterPro" id="IPR017958">
    <property type="entry name" value="Gln-tRNA_amidoTrfase_suB_CS"/>
</dbReference>
<dbReference type="InterPro" id="IPR014746">
    <property type="entry name" value="Gln_synth/guanido_kin_cat_dom"/>
</dbReference>
<dbReference type="NCBIfam" id="TIGR00133">
    <property type="entry name" value="gatB"/>
    <property type="match status" value="1"/>
</dbReference>
<dbReference type="NCBIfam" id="NF004012">
    <property type="entry name" value="PRK05477.1-2"/>
    <property type="match status" value="1"/>
</dbReference>
<dbReference type="NCBIfam" id="NF004014">
    <property type="entry name" value="PRK05477.1-4"/>
    <property type="match status" value="1"/>
</dbReference>
<dbReference type="NCBIfam" id="NF004015">
    <property type="entry name" value="PRK05477.1-5"/>
    <property type="match status" value="1"/>
</dbReference>
<dbReference type="PANTHER" id="PTHR11659">
    <property type="entry name" value="GLUTAMYL-TRNA GLN AMIDOTRANSFERASE SUBUNIT B MITOCHONDRIAL AND PROKARYOTIC PET112-RELATED"/>
    <property type="match status" value="1"/>
</dbReference>
<dbReference type="PANTHER" id="PTHR11659:SF0">
    <property type="entry name" value="GLUTAMYL-TRNA(GLN) AMIDOTRANSFERASE SUBUNIT B, MITOCHONDRIAL"/>
    <property type="match status" value="1"/>
</dbReference>
<dbReference type="Pfam" id="PF02934">
    <property type="entry name" value="GatB_N"/>
    <property type="match status" value="1"/>
</dbReference>
<dbReference type="Pfam" id="PF02637">
    <property type="entry name" value="GatB_Yqey"/>
    <property type="match status" value="1"/>
</dbReference>
<dbReference type="SMART" id="SM00845">
    <property type="entry name" value="GatB_Yqey"/>
    <property type="match status" value="1"/>
</dbReference>
<dbReference type="SUPFAM" id="SSF89095">
    <property type="entry name" value="GatB/YqeY motif"/>
    <property type="match status" value="1"/>
</dbReference>
<dbReference type="SUPFAM" id="SSF55931">
    <property type="entry name" value="Glutamine synthetase/guanido kinase"/>
    <property type="match status" value="1"/>
</dbReference>
<dbReference type="PROSITE" id="PS01234">
    <property type="entry name" value="GATB"/>
    <property type="match status" value="1"/>
</dbReference>
<comment type="function">
    <text evidence="1">Allows the formation of correctly charged Asn-tRNA(Asn) or Gln-tRNA(Gln) through the transamidation of misacylated Asp-tRNA(Asn) or Glu-tRNA(Gln) in organisms which lack either or both of asparaginyl-tRNA or glutaminyl-tRNA synthetases. The reaction takes place in the presence of glutamine and ATP through an activated phospho-Asp-tRNA(Asn) or phospho-Glu-tRNA(Gln).</text>
</comment>
<comment type="catalytic activity">
    <reaction evidence="1">
        <text>L-glutamyl-tRNA(Gln) + L-glutamine + ATP + H2O = L-glutaminyl-tRNA(Gln) + L-glutamate + ADP + phosphate + H(+)</text>
        <dbReference type="Rhea" id="RHEA:17521"/>
        <dbReference type="Rhea" id="RHEA-COMP:9681"/>
        <dbReference type="Rhea" id="RHEA-COMP:9684"/>
        <dbReference type="ChEBI" id="CHEBI:15377"/>
        <dbReference type="ChEBI" id="CHEBI:15378"/>
        <dbReference type="ChEBI" id="CHEBI:29985"/>
        <dbReference type="ChEBI" id="CHEBI:30616"/>
        <dbReference type="ChEBI" id="CHEBI:43474"/>
        <dbReference type="ChEBI" id="CHEBI:58359"/>
        <dbReference type="ChEBI" id="CHEBI:78520"/>
        <dbReference type="ChEBI" id="CHEBI:78521"/>
        <dbReference type="ChEBI" id="CHEBI:456216"/>
    </reaction>
</comment>
<comment type="catalytic activity">
    <reaction evidence="1">
        <text>L-aspartyl-tRNA(Asn) + L-glutamine + ATP + H2O = L-asparaginyl-tRNA(Asn) + L-glutamate + ADP + phosphate + 2 H(+)</text>
        <dbReference type="Rhea" id="RHEA:14513"/>
        <dbReference type="Rhea" id="RHEA-COMP:9674"/>
        <dbReference type="Rhea" id="RHEA-COMP:9677"/>
        <dbReference type="ChEBI" id="CHEBI:15377"/>
        <dbReference type="ChEBI" id="CHEBI:15378"/>
        <dbReference type="ChEBI" id="CHEBI:29985"/>
        <dbReference type="ChEBI" id="CHEBI:30616"/>
        <dbReference type="ChEBI" id="CHEBI:43474"/>
        <dbReference type="ChEBI" id="CHEBI:58359"/>
        <dbReference type="ChEBI" id="CHEBI:78515"/>
        <dbReference type="ChEBI" id="CHEBI:78516"/>
        <dbReference type="ChEBI" id="CHEBI:456216"/>
    </reaction>
</comment>
<comment type="subunit">
    <text evidence="1">Heterotrimer of A, B and C subunits.</text>
</comment>
<comment type="similarity">
    <text evidence="1">Belongs to the GatB/GatE family. GatB subfamily.</text>
</comment>
<gene>
    <name evidence="1" type="primary">gatB</name>
    <name type="ordered locus">TERTU_3837</name>
</gene>